<organism>
    <name type="scientific">Drosophila persimilis</name>
    <name type="common">Fruit fly</name>
    <dbReference type="NCBI Taxonomy" id="7234"/>
    <lineage>
        <taxon>Eukaryota</taxon>
        <taxon>Metazoa</taxon>
        <taxon>Ecdysozoa</taxon>
        <taxon>Arthropoda</taxon>
        <taxon>Hexapoda</taxon>
        <taxon>Insecta</taxon>
        <taxon>Pterygota</taxon>
        <taxon>Neoptera</taxon>
        <taxon>Endopterygota</taxon>
        <taxon>Diptera</taxon>
        <taxon>Brachycera</taxon>
        <taxon>Muscomorpha</taxon>
        <taxon>Ephydroidea</taxon>
        <taxon>Drosophilidae</taxon>
        <taxon>Drosophila</taxon>
        <taxon>Sophophora</taxon>
    </lineage>
</organism>
<accession>B4GUT1</accession>
<reference key="1">
    <citation type="journal article" date="2007" name="Nature">
        <title>Evolution of genes and genomes on the Drosophila phylogeny.</title>
        <authorList>
            <consortium name="Drosophila 12 genomes consortium"/>
        </authorList>
    </citation>
    <scope>NUCLEOTIDE SEQUENCE [LARGE SCALE GENOMIC DNA]</scope>
    <source>
        <strain>MSH-3 / Tucson 14011-0111.49</strain>
    </source>
</reference>
<dbReference type="EMBL" id="CH479191">
    <property type="protein sequence ID" value="EDW26364.1"/>
    <property type="molecule type" value="Genomic_DNA"/>
</dbReference>
<dbReference type="SMR" id="B4GUT1"/>
<dbReference type="STRING" id="7234.B4GUT1"/>
<dbReference type="EnsemblMetazoa" id="FBtr0189747">
    <property type="protein sequence ID" value="FBpp0188239"/>
    <property type="gene ID" value="FBgn0161722"/>
</dbReference>
<dbReference type="EnsemblMetazoa" id="XM_002022324.2">
    <property type="protein sequence ID" value="XP_002022360.1"/>
    <property type="gene ID" value="LOC6597155"/>
</dbReference>
<dbReference type="GeneID" id="6597155"/>
<dbReference type="KEGG" id="dpe:6597155"/>
<dbReference type="CTD" id="81605"/>
<dbReference type="eggNOG" id="KOG4146">
    <property type="taxonomic scope" value="Eukaryota"/>
</dbReference>
<dbReference type="HOGENOM" id="CLU_148208_0_1_1"/>
<dbReference type="OMA" id="DYELQPN"/>
<dbReference type="OrthoDB" id="10248987at2759"/>
<dbReference type="PhylomeDB" id="B4GUT1"/>
<dbReference type="UniPathway" id="UPA00988"/>
<dbReference type="Proteomes" id="UP000008744">
    <property type="component" value="Unassembled WGS sequence"/>
</dbReference>
<dbReference type="GO" id="GO:0005829">
    <property type="term" value="C:cytosol"/>
    <property type="evidence" value="ECO:0007669"/>
    <property type="project" value="UniProtKB-UniRule"/>
</dbReference>
<dbReference type="GO" id="GO:0046329">
    <property type="term" value="P:negative regulation of JNK cascade"/>
    <property type="evidence" value="ECO:0007669"/>
    <property type="project" value="EnsemblMetazoa"/>
</dbReference>
<dbReference type="GO" id="GO:0032447">
    <property type="term" value="P:protein urmylation"/>
    <property type="evidence" value="ECO:0007669"/>
    <property type="project" value="UniProtKB-UniRule"/>
</dbReference>
<dbReference type="GO" id="GO:0034227">
    <property type="term" value="P:tRNA thio-modification"/>
    <property type="evidence" value="ECO:0007669"/>
    <property type="project" value="UniProtKB-UniRule"/>
</dbReference>
<dbReference type="GO" id="GO:0002098">
    <property type="term" value="P:tRNA wobble uridine modification"/>
    <property type="evidence" value="ECO:0007669"/>
    <property type="project" value="UniProtKB-UniRule"/>
</dbReference>
<dbReference type="CDD" id="cd01764">
    <property type="entry name" value="Ubl_Urm1"/>
    <property type="match status" value="1"/>
</dbReference>
<dbReference type="FunFam" id="3.10.20.30:FF:000021">
    <property type="entry name" value="Ubiquitin-related modifier 1"/>
    <property type="match status" value="1"/>
</dbReference>
<dbReference type="Gene3D" id="3.10.20.30">
    <property type="match status" value="1"/>
</dbReference>
<dbReference type="HAMAP" id="MF_03048">
    <property type="entry name" value="Urm1"/>
    <property type="match status" value="1"/>
</dbReference>
<dbReference type="InterPro" id="IPR012675">
    <property type="entry name" value="Beta-grasp_dom_sf"/>
</dbReference>
<dbReference type="InterPro" id="IPR016155">
    <property type="entry name" value="Mopterin_synth/thiamin_S_b"/>
</dbReference>
<dbReference type="InterPro" id="IPR015221">
    <property type="entry name" value="Urm1"/>
</dbReference>
<dbReference type="PANTHER" id="PTHR14986">
    <property type="entry name" value="RURM1 PROTEIN"/>
    <property type="match status" value="1"/>
</dbReference>
<dbReference type="Pfam" id="PF09138">
    <property type="entry name" value="Urm1"/>
    <property type="match status" value="1"/>
</dbReference>
<dbReference type="PIRSF" id="PIRSF037379">
    <property type="entry name" value="Ubiquitin-related_modifier_1"/>
    <property type="match status" value="1"/>
</dbReference>
<dbReference type="SUPFAM" id="SSF54285">
    <property type="entry name" value="MoaD/ThiS"/>
    <property type="match status" value="1"/>
</dbReference>
<proteinExistence type="inferred from homology"/>
<comment type="function">
    <text evidence="2">Acts as a sulfur carrier required for 2-thiolation of mcm(5)S(2)U at tRNA wobble positions of cytosolic tRNA(Lys), tRNA(Glu) and tRNA(Gln). Serves as sulfur donor in tRNA 2-thiolation reaction by being thiocarboxylated (-COSH) at its C-terminus by MOCS3. The sulfur is then transferred to tRNA to form 2-thiolation of mcm(5)S(2)U. Also acts as a ubiquitin-like protein (UBL) that is covalently conjugated via an isopeptide bond to lysine residues of target proteins such as Prx2/Jafrac1, Ciao1, Eip71CD and GILT1. The thiocarboxylated form serves as substrate for conjugation and oxidative stress specifically induces the formation of UBL-protein conjugates.</text>
</comment>
<comment type="pathway">
    <text evidence="2">tRNA modification; 5-methoxycarbonylmethyl-2-thiouridine-tRNA biosynthesis.</text>
</comment>
<comment type="subunit">
    <text evidence="1">Interacts with cer.</text>
</comment>
<comment type="subcellular location">
    <subcellularLocation>
        <location evidence="2">Cytoplasm</location>
    </subcellularLocation>
</comment>
<comment type="PTM">
    <text evidence="2">C-terminal thiocarboxylation occurs in 2 steps, it is first acyl-adenylated (-COAMP) via the hesA/moeB/thiF part of the MOCS3 homolog, then thiocarboxylated (-COSH) via the rhodanese domain of the MOCS3 homolog.</text>
</comment>
<comment type="similarity">
    <text evidence="2">Belongs to the URM1 family.</text>
</comment>
<name>URM1_DROPE</name>
<sequence>MDDLKIILEFSAGAELLFGNIKRRQLFLDGHKKWTIANLLKWMHANILTERPELFLQGDTVRPGILVLINDTDWELLGELDYELQANDNVLFISTLHGG</sequence>
<feature type="chain" id="PRO_0000367860" description="Ubiquitin-related modifier 1 homolog">
    <location>
        <begin position="1"/>
        <end position="99"/>
    </location>
</feature>
<feature type="modified residue" description="1-thioglycine" evidence="2">
    <location>
        <position position="99"/>
    </location>
</feature>
<feature type="cross-link" description="Glycyl lysine isopeptide (Gly-Lys) (interchain with K-? in acceptor proteins)" evidence="2">
    <location>
        <position position="99"/>
    </location>
</feature>
<gene>
    <name evidence="1" type="primary">Urm1</name>
    <name type="ORF">GL24132</name>
</gene>
<keyword id="KW-0963">Cytoplasm</keyword>
<keyword id="KW-1017">Isopeptide bond</keyword>
<keyword id="KW-1185">Reference proteome</keyword>
<keyword id="KW-0819">tRNA processing</keyword>
<keyword id="KW-0833">Ubl conjugation pathway</keyword>
<protein>
    <recommendedName>
        <fullName evidence="2">Ubiquitin-related modifier 1 homolog</fullName>
    </recommendedName>
</protein>
<evidence type="ECO:0000250" key="1">
    <source>
        <dbReference type="UniProtKB" id="Q7KU86"/>
    </source>
</evidence>
<evidence type="ECO:0000255" key="2">
    <source>
        <dbReference type="HAMAP-Rule" id="MF_03048"/>
    </source>
</evidence>